<evidence type="ECO:0000255" key="1">
    <source>
        <dbReference type="HAMAP-Rule" id="MF_00581"/>
    </source>
</evidence>
<name>ASSY_ACTSZ</name>
<feature type="chain" id="PRO_1000072589" description="Argininosuccinate synthase">
    <location>
        <begin position="1"/>
        <end position="444"/>
    </location>
</feature>
<feature type="binding site" evidence="1">
    <location>
        <begin position="18"/>
        <end position="26"/>
    </location>
    <ligand>
        <name>ATP</name>
        <dbReference type="ChEBI" id="CHEBI:30616"/>
    </ligand>
</feature>
<feature type="binding site" evidence="1">
    <location>
        <position position="44"/>
    </location>
    <ligand>
        <name>ATP</name>
        <dbReference type="ChEBI" id="CHEBI:30616"/>
    </ligand>
</feature>
<feature type="binding site" evidence="1">
    <location>
        <position position="100"/>
    </location>
    <ligand>
        <name>L-citrulline</name>
        <dbReference type="ChEBI" id="CHEBI:57743"/>
    </ligand>
</feature>
<feature type="binding site" evidence="1">
    <location>
        <position position="130"/>
    </location>
    <ligand>
        <name>ATP</name>
        <dbReference type="ChEBI" id="CHEBI:30616"/>
    </ligand>
</feature>
<feature type="binding site" evidence="1">
    <location>
        <position position="132"/>
    </location>
    <ligand>
        <name>ATP</name>
        <dbReference type="ChEBI" id="CHEBI:30616"/>
    </ligand>
</feature>
<feature type="binding site" evidence="1">
    <location>
        <position position="132"/>
    </location>
    <ligand>
        <name>L-aspartate</name>
        <dbReference type="ChEBI" id="CHEBI:29991"/>
    </ligand>
</feature>
<feature type="binding site" evidence="1">
    <location>
        <position position="136"/>
    </location>
    <ligand>
        <name>L-aspartate</name>
        <dbReference type="ChEBI" id="CHEBI:29991"/>
    </ligand>
</feature>
<feature type="binding site" evidence="1">
    <location>
        <position position="136"/>
    </location>
    <ligand>
        <name>L-citrulline</name>
        <dbReference type="ChEBI" id="CHEBI:57743"/>
    </ligand>
</feature>
<feature type="binding site" evidence="1">
    <location>
        <position position="137"/>
    </location>
    <ligand>
        <name>ATP</name>
        <dbReference type="ChEBI" id="CHEBI:30616"/>
    </ligand>
</feature>
<feature type="binding site" evidence="1">
    <location>
        <position position="137"/>
    </location>
    <ligand>
        <name>L-aspartate</name>
        <dbReference type="ChEBI" id="CHEBI:29991"/>
    </ligand>
</feature>
<feature type="binding site" evidence="1">
    <location>
        <position position="140"/>
    </location>
    <ligand>
        <name>L-citrulline</name>
        <dbReference type="ChEBI" id="CHEBI:57743"/>
    </ligand>
</feature>
<feature type="binding site" evidence="1">
    <location>
        <position position="193"/>
    </location>
    <ligand>
        <name>L-citrulline</name>
        <dbReference type="ChEBI" id="CHEBI:57743"/>
    </ligand>
</feature>
<feature type="binding site" evidence="1">
    <location>
        <position position="195"/>
    </location>
    <ligand>
        <name>ATP</name>
        <dbReference type="ChEBI" id="CHEBI:30616"/>
    </ligand>
</feature>
<feature type="binding site" evidence="1">
    <location>
        <position position="202"/>
    </location>
    <ligand>
        <name>L-citrulline</name>
        <dbReference type="ChEBI" id="CHEBI:57743"/>
    </ligand>
</feature>
<feature type="binding site" evidence="1">
    <location>
        <position position="204"/>
    </location>
    <ligand>
        <name>L-citrulline</name>
        <dbReference type="ChEBI" id="CHEBI:57743"/>
    </ligand>
</feature>
<feature type="binding site" evidence="1">
    <location>
        <position position="281"/>
    </location>
    <ligand>
        <name>L-citrulline</name>
        <dbReference type="ChEBI" id="CHEBI:57743"/>
    </ligand>
</feature>
<gene>
    <name evidence="1" type="primary">argG</name>
    <name type="ordered locus">Asuc_0985</name>
</gene>
<keyword id="KW-0028">Amino-acid biosynthesis</keyword>
<keyword id="KW-0055">Arginine biosynthesis</keyword>
<keyword id="KW-0067">ATP-binding</keyword>
<keyword id="KW-0963">Cytoplasm</keyword>
<keyword id="KW-0436">Ligase</keyword>
<keyword id="KW-0547">Nucleotide-binding</keyword>
<keyword id="KW-1185">Reference proteome</keyword>
<accession>A6VN06</accession>
<organism>
    <name type="scientific">Actinobacillus succinogenes (strain ATCC 55618 / DSM 22257 / CCUG 43843 / 130Z)</name>
    <dbReference type="NCBI Taxonomy" id="339671"/>
    <lineage>
        <taxon>Bacteria</taxon>
        <taxon>Pseudomonadati</taxon>
        <taxon>Pseudomonadota</taxon>
        <taxon>Gammaproteobacteria</taxon>
        <taxon>Pasteurellales</taxon>
        <taxon>Pasteurellaceae</taxon>
        <taxon>Actinobacillus</taxon>
    </lineage>
</organism>
<protein>
    <recommendedName>
        <fullName evidence="1">Argininosuccinate synthase</fullName>
        <ecNumber evidence="1">6.3.4.5</ecNumber>
    </recommendedName>
    <alternativeName>
        <fullName evidence="1">Citrulline--aspartate ligase</fullName>
    </alternativeName>
</protein>
<proteinExistence type="inferred from homology"/>
<dbReference type="EC" id="6.3.4.5" evidence="1"/>
<dbReference type="EMBL" id="CP000746">
    <property type="protein sequence ID" value="ABR74353.1"/>
    <property type="molecule type" value="Genomic_DNA"/>
</dbReference>
<dbReference type="RefSeq" id="WP_012072730.1">
    <property type="nucleotide sequence ID" value="NC_009655.1"/>
</dbReference>
<dbReference type="SMR" id="A6VN06"/>
<dbReference type="STRING" id="339671.Asuc_0985"/>
<dbReference type="KEGG" id="asu:Asuc_0985"/>
<dbReference type="eggNOG" id="COG0137">
    <property type="taxonomic scope" value="Bacteria"/>
</dbReference>
<dbReference type="HOGENOM" id="CLU_032784_4_1_6"/>
<dbReference type="OrthoDB" id="9801641at2"/>
<dbReference type="UniPathway" id="UPA00068">
    <property type="reaction ID" value="UER00113"/>
</dbReference>
<dbReference type="Proteomes" id="UP000001114">
    <property type="component" value="Chromosome"/>
</dbReference>
<dbReference type="GO" id="GO:0005737">
    <property type="term" value="C:cytoplasm"/>
    <property type="evidence" value="ECO:0007669"/>
    <property type="project" value="UniProtKB-SubCell"/>
</dbReference>
<dbReference type="GO" id="GO:0004055">
    <property type="term" value="F:argininosuccinate synthase activity"/>
    <property type="evidence" value="ECO:0007669"/>
    <property type="project" value="UniProtKB-UniRule"/>
</dbReference>
<dbReference type="GO" id="GO:0005524">
    <property type="term" value="F:ATP binding"/>
    <property type="evidence" value="ECO:0007669"/>
    <property type="project" value="UniProtKB-UniRule"/>
</dbReference>
<dbReference type="GO" id="GO:0042803">
    <property type="term" value="F:protein homodimerization activity"/>
    <property type="evidence" value="ECO:0007669"/>
    <property type="project" value="InterPro"/>
</dbReference>
<dbReference type="GO" id="GO:0000053">
    <property type="term" value="P:argininosuccinate metabolic process"/>
    <property type="evidence" value="ECO:0007669"/>
    <property type="project" value="TreeGrafter"/>
</dbReference>
<dbReference type="GO" id="GO:0006526">
    <property type="term" value="P:L-arginine biosynthetic process"/>
    <property type="evidence" value="ECO:0007669"/>
    <property type="project" value="UniProtKB-UniRule"/>
</dbReference>
<dbReference type="GO" id="GO:0000050">
    <property type="term" value="P:urea cycle"/>
    <property type="evidence" value="ECO:0007669"/>
    <property type="project" value="TreeGrafter"/>
</dbReference>
<dbReference type="CDD" id="cd01999">
    <property type="entry name" value="ASS"/>
    <property type="match status" value="1"/>
</dbReference>
<dbReference type="FunFam" id="1.10.287.400:FF:000001">
    <property type="entry name" value="Argininosuccinate synthase"/>
    <property type="match status" value="1"/>
</dbReference>
<dbReference type="Gene3D" id="1.10.287.400">
    <property type="match status" value="1"/>
</dbReference>
<dbReference type="Gene3D" id="3.90.1260.10">
    <property type="entry name" value="Argininosuccinate synthetase, chain A, domain 2"/>
    <property type="match status" value="1"/>
</dbReference>
<dbReference type="Gene3D" id="3.40.50.620">
    <property type="entry name" value="HUPs"/>
    <property type="match status" value="1"/>
</dbReference>
<dbReference type="HAMAP" id="MF_00581">
    <property type="entry name" value="Arg_succ_synth_type2"/>
    <property type="match status" value="1"/>
</dbReference>
<dbReference type="InterPro" id="IPR023437">
    <property type="entry name" value="Arg_succ_synth_type2_subfam"/>
</dbReference>
<dbReference type="InterPro" id="IPR048268">
    <property type="entry name" value="Arginosuc_syn_C"/>
</dbReference>
<dbReference type="InterPro" id="IPR048267">
    <property type="entry name" value="Arginosuc_syn_N"/>
</dbReference>
<dbReference type="InterPro" id="IPR001518">
    <property type="entry name" value="Arginosuc_synth"/>
</dbReference>
<dbReference type="InterPro" id="IPR018223">
    <property type="entry name" value="Arginosuc_synth_CS"/>
</dbReference>
<dbReference type="InterPro" id="IPR023434">
    <property type="entry name" value="Arginosuc_synth_type_1_subfam"/>
</dbReference>
<dbReference type="InterPro" id="IPR024074">
    <property type="entry name" value="AS_cat/multimer_dom_body"/>
</dbReference>
<dbReference type="InterPro" id="IPR024073">
    <property type="entry name" value="AS_multimer_C_tail"/>
</dbReference>
<dbReference type="InterPro" id="IPR014729">
    <property type="entry name" value="Rossmann-like_a/b/a_fold"/>
</dbReference>
<dbReference type="NCBIfam" id="TIGR00032">
    <property type="entry name" value="argG"/>
    <property type="match status" value="1"/>
</dbReference>
<dbReference type="NCBIfam" id="NF003779">
    <property type="entry name" value="PRK05370.1"/>
    <property type="match status" value="1"/>
</dbReference>
<dbReference type="PANTHER" id="PTHR11587">
    <property type="entry name" value="ARGININOSUCCINATE SYNTHASE"/>
    <property type="match status" value="1"/>
</dbReference>
<dbReference type="PANTHER" id="PTHR11587:SF2">
    <property type="entry name" value="ARGININOSUCCINATE SYNTHASE"/>
    <property type="match status" value="1"/>
</dbReference>
<dbReference type="Pfam" id="PF20979">
    <property type="entry name" value="Arginosuc_syn_C"/>
    <property type="match status" value="1"/>
</dbReference>
<dbReference type="Pfam" id="PF00764">
    <property type="entry name" value="Arginosuc_synth"/>
    <property type="match status" value="1"/>
</dbReference>
<dbReference type="SUPFAM" id="SSF52402">
    <property type="entry name" value="Adenine nucleotide alpha hydrolases-like"/>
    <property type="match status" value="1"/>
</dbReference>
<dbReference type="SUPFAM" id="SSF69864">
    <property type="entry name" value="Argininosuccinate synthetase, C-terminal domain"/>
    <property type="match status" value="1"/>
</dbReference>
<dbReference type="PROSITE" id="PS00564">
    <property type="entry name" value="ARGININOSUCCIN_SYN_1"/>
    <property type="match status" value="1"/>
</dbReference>
<dbReference type="PROSITE" id="PS00565">
    <property type="entry name" value="ARGININOSUCCIN_SYN_2"/>
    <property type="match status" value="1"/>
</dbReference>
<sequence>MSNTILQNLPEGQKVGIAFSGGLDTSAALLWMRQKGAVPYAYTANLGQPDEDDYNAIPKKAMAYGAENARLIDCRTQLAQEGIAAIQCGAFHISTGGVTYFNTTPLGRAVTGTMLVAAMKEDDVNIWGDGSTFKGNDIERFYRYGLLTNPNLKIYKPWLDDQFIDELGGRFEMSQFLIANGFDYKMSVEKAYSTDSNMLGATHEAKDLEDLSTGINIVKPIMGVAFWDESVEIKPEVVTVRFEEGVPVELNGKRFDDVVELFMEANRIGGRHGLGMSDQIENRIIEAKSRGIYEAPGMALFHIAYERLLTGIHNEDTIEQYRINGLRLGRLLYQGRWFDPQALMLRESSQRWVAKAITGEVKLELRRGNDYSILDTVSPNLTYEAERLSMEKVEDAPFDPIDRIGQLTMRNLDVTDTRNKLGVYSKAGLLTAGQDAVVPQLDKK</sequence>
<comment type="catalytic activity">
    <reaction evidence="1">
        <text>L-citrulline + L-aspartate + ATP = 2-(N(omega)-L-arginino)succinate + AMP + diphosphate + H(+)</text>
        <dbReference type="Rhea" id="RHEA:10932"/>
        <dbReference type="ChEBI" id="CHEBI:15378"/>
        <dbReference type="ChEBI" id="CHEBI:29991"/>
        <dbReference type="ChEBI" id="CHEBI:30616"/>
        <dbReference type="ChEBI" id="CHEBI:33019"/>
        <dbReference type="ChEBI" id="CHEBI:57472"/>
        <dbReference type="ChEBI" id="CHEBI:57743"/>
        <dbReference type="ChEBI" id="CHEBI:456215"/>
        <dbReference type="EC" id="6.3.4.5"/>
    </reaction>
</comment>
<comment type="pathway">
    <text evidence="1">Amino-acid biosynthesis; L-arginine biosynthesis; L-arginine from L-ornithine and carbamoyl phosphate: step 2/3.</text>
</comment>
<comment type="subunit">
    <text evidence="1">Homotetramer.</text>
</comment>
<comment type="subcellular location">
    <subcellularLocation>
        <location evidence="1">Cytoplasm</location>
    </subcellularLocation>
</comment>
<comment type="similarity">
    <text evidence="1">Belongs to the argininosuccinate synthase family. Type 2 subfamily.</text>
</comment>
<reference key="1">
    <citation type="journal article" date="2010" name="BMC Genomics">
        <title>A genomic perspective on the potential of Actinobacillus succinogenes for industrial succinate production.</title>
        <authorList>
            <person name="McKinlay J.B."/>
            <person name="Laivenieks M."/>
            <person name="Schindler B.D."/>
            <person name="McKinlay A.A."/>
            <person name="Siddaramappa S."/>
            <person name="Challacombe J.F."/>
            <person name="Lowry S.R."/>
            <person name="Clum A."/>
            <person name="Lapidus A.L."/>
            <person name="Burkhart K.B."/>
            <person name="Harkins V."/>
            <person name="Vieille C."/>
        </authorList>
    </citation>
    <scope>NUCLEOTIDE SEQUENCE [LARGE SCALE GENOMIC DNA]</scope>
    <source>
        <strain>ATCC 55618 / DSM 22257 / CCUG 43843 / 130Z</strain>
    </source>
</reference>